<protein>
    <recommendedName>
        <fullName evidence="1">Ribosomal RNA large subunit methyltransferase H</fullName>
        <ecNumber evidence="1">2.1.1.177</ecNumber>
    </recommendedName>
    <alternativeName>
        <fullName evidence="1">23S rRNA (pseudouridine1915-N3)-methyltransferase</fullName>
    </alternativeName>
    <alternativeName>
        <fullName evidence="1">23S rRNA m3Psi1915 methyltransferase</fullName>
    </alternativeName>
    <alternativeName>
        <fullName evidence="1">rRNA (pseudouridine-N3-)-methyltransferase RlmH</fullName>
    </alternativeName>
</protein>
<accession>A6TX97</accession>
<comment type="function">
    <text evidence="1">Specifically methylates the pseudouridine at position 1915 (m3Psi1915) in 23S rRNA.</text>
</comment>
<comment type="catalytic activity">
    <reaction evidence="1">
        <text>pseudouridine(1915) in 23S rRNA + S-adenosyl-L-methionine = N(3)-methylpseudouridine(1915) in 23S rRNA + S-adenosyl-L-homocysteine + H(+)</text>
        <dbReference type="Rhea" id="RHEA:42752"/>
        <dbReference type="Rhea" id="RHEA-COMP:10221"/>
        <dbReference type="Rhea" id="RHEA-COMP:10222"/>
        <dbReference type="ChEBI" id="CHEBI:15378"/>
        <dbReference type="ChEBI" id="CHEBI:57856"/>
        <dbReference type="ChEBI" id="CHEBI:59789"/>
        <dbReference type="ChEBI" id="CHEBI:65314"/>
        <dbReference type="ChEBI" id="CHEBI:74486"/>
        <dbReference type="EC" id="2.1.1.177"/>
    </reaction>
</comment>
<comment type="subunit">
    <text evidence="1">Homodimer.</text>
</comment>
<comment type="subcellular location">
    <subcellularLocation>
        <location evidence="1">Cytoplasm</location>
    </subcellularLocation>
</comment>
<comment type="similarity">
    <text evidence="1">Belongs to the RNA methyltransferase RlmH family.</text>
</comment>
<evidence type="ECO:0000255" key="1">
    <source>
        <dbReference type="HAMAP-Rule" id="MF_00658"/>
    </source>
</evidence>
<gene>
    <name evidence="1" type="primary">rlmH</name>
    <name type="ordered locus">Amet_4749</name>
</gene>
<reference key="1">
    <citation type="journal article" date="2016" name="Genome Announc.">
        <title>Complete genome sequence of Alkaliphilus metalliredigens strain QYMF, an alkaliphilic and metal-reducing bacterium isolated from borax-contaminated leachate ponds.</title>
        <authorList>
            <person name="Hwang C."/>
            <person name="Copeland A."/>
            <person name="Lucas S."/>
            <person name="Lapidus A."/>
            <person name="Barry K."/>
            <person name="Detter J.C."/>
            <person name="Glavina Del Rio T."/>
            <person name="Hammon N."/>
            <person name="Israni S."/>
            <person name="Dalin E."/>
            <person name="Tice H."/>
            <person name="Pitluck S."/>
            <person name="Chertkov O."/>
            <person name="Brettin T."/>
            <person name="Bruce D."/>
            <person name="Han C."/>
            <person name="Schmutz J."/>
            <person name="Larimer F."/>
            <person name="Land M.L."/>
            <person name="Hauser L."/>
            <person name="Kyrpides N."/>
            <person name="Mikhailova N."/>
            <person name="Ye Q."/>
            <person name="Zhou J."/>
            <person name="Richardson P."/>
            <person name="Fields M.W."/>
        </authorList>
    </citation>
    <scope>NUCLEOTIDE SEQUENCE [LARGE SCALE GENOMIC DNA]</scope>
    <source>
        <strain>QYMF</strain>
    </source>
</reference>
<keyword id="KW-0963">Cytoplasm</keyword>
<keyword id="KW-0489">Methyltransferase</keyword>
<keyword id="KW-1185">Reference proteome</keyword>
<keyword id="KW-0698">rRNA processing</keyword>
<keyword id="KW-0949">S-adenosyl-L-methionine</keyword>
<keyword id="KW-0808">Transferase</keyword>
<sequence length="159" mass="17940">MNITVISVGKLKEKYLKQGIAEYDKRLSRYCKLNFIEVADEKAPENLSEAEEIMIKDKEGEAILKSIKDGMFVIALDLAGKMLSSEALSEKIDKLALQGNSHITFVIGGSLGLSQGVLKRADFKLCFSPMTFPHQLMKLILLEQVYRAFRISKNEPYHK</sequence>
<organism>
    <name type="scientific">Alkaliphilus metalliredigens (strain QYMF)</name>
    <dbReference type="NCBI Taxonomy" id="293826"/>
    <lineage>
        <taxon>Bacteria</taxon>
        <taxon>Bacillati</taxon>
        <taxon>Bacillota</taxon>
        <taxon>Clostridia</taxon>
        <taxon>Peptostreptococcales</taxon>
        <taxon>Natronincolaceae</taxon>
        <taxon>Alkaliphilus</taxon>
    </lineage>
</organism>
<feature type="chain" id="PRO_1000061753" description="Ribosomal RNA large subunit methyltransferase H">
    <location>
        <begin position="1"/>
        <end position="159"/>
    </location>
</feature>
<feature type="binding site" evidence="1">
    <location>
        <position position="76"/>
    </location>
    <ligand>
        <name>S-adenosyl-L-methionine</name>
        <dbReference type="ChEBI" id="CHEBI:59789"/>
    </ligand>
</feature>
<feature type="binding site" evidence="1">
    <location>
        <position position="108"/>
    </location>
    <ligand>
        <name>S-adenosyl-L-methionine</name>
        <dbReference type="ChEBI" id="CHEBI:59789"/>
    </ligand>
</feature>
<feature type="binding site" evidence="1">
    <location>
        <begin position="127"/>
        <end position="132"/>
    </location>
    <ligand>
        <name>S-adenosyl-L-methionine</name>
        <dbReference type="ChEBI" id="CHEBI:59789"/>
    </ligand>
</feature>
<name>RLMH_ALKMQ</name>
<proteinExistence type="inferred from homology"/>
<dbReference type="EC" id="2.1.1.177" evidence="1"/>
<dbReference type="EMBL" id="CP000724">
    <property type="protein sequence ID" value="ABR50815.1"/>
    <property type="molecule type" value="Genomic_DNA"/>
</dbReference>
<dbReference type="RefSeq" id="WP_012065700.1">
    <property type="nucleotide sequence ID" value="NC_009633.1"/>
</dbReference>
<dbReference type="SMR" id="A6TX97"/>
<dbReference type="STRING" id="293826.Amet_4749"/>
<dbReference type="KEGG" id="amt:Amet_4749"/>
<dbReference type="eggNOG" id="COG1576">
    <property type="taxonomic scope" value="Bacteria"/>
</dbReference>
<dbReference type="HOGENOM" id="CLU_100552_0_0_9"/>
<dbReference type="OrthoDB" id="9806643at2"/>
<dbReference type="Proteomes" id="UP000001572">
    <property type="component" value="Chromosome"/>
</dbReference>
<dbReference type="GO" id="GO:0005737">
    <property type="term" value="C:cytoplasm"/>
    <property type="evidence" value="ECO:0007669"/>
    <property type="project" value="UniProtKB-SubCell"/>
</dbReference>
<dbReference type="GO" id="GO:0070038">
    <property type="term" value="F:rRNA (pseudouridine-N3-)-methyltransferase activity"/>
    <property type="evidence" value="ECO:0007669"/>
    <property type="project" value="UniProtKB-UniRule"/>
</dbReference>
<dbReference type="CDD" id="cd18081">
    <property type="entry name" value="RlmH-like"/>
    <property type="match status" value="1"/>
</dbReference>
<dbReference type="Gene3D" id="3.40.1280.10">
    <property type="match status" value="1"/>
</dbReference>
<dbReference type="HAMAP" id="MF_00658">
    <property type="entry name" value="23SrRNA_methyltr_H"/>
    <property type="match status" value="1"/>
</dbReference>
<dbReference type="InterPro" id="IPR029028">
    <property type="entry name" value="Alpha/beta_knot_MTases"/>
</dbReference>
<dbReference type="InterPro" id="IPR003742">
    <property type="entry name" value="RlmH-like"/>
</dbReference>
<dbReference type="InterPro" id="IPR029026">
    <property type="entry name" value="tRNA_m1G_MTases_N"/>
</dbReference>
<dbReference type="NCBIfam" id="NF000985">
    <property type="entry name" value="PRK00103.1-3"/>
    <property type="match status" value="1"/>
</dbReference>
<dbReference type="NCBIfam" id="TIGR00246">
    <property type="entry name" value="tRNA_RlmH_YbeA"/>
    <property type="match status" value="1"/>
</dbReference>
<dbReference type="PANTHER" id="PTHR33603">
    <property type="entry name" value="METHYLTRANSFERASE"/>
    <property type="match status" value="1"/>
</dbReference>
<dbReference type="PANTHER" id="PTHR33603:SF1">
    <property type="entry name" value="RIBOSOMAL RNA LARGE SUBUNIT METHYLTRANSFERASE H"/>
    <property type="match status" value="1"/>
</dbReference>
<dbReference type="Pfam" id="PF02590">
    <property type="entry name" value="SPOUT_MTase"/>
    <property type="match status" value="1"/>
</dbReference>
<dbReference type="PIRSF" id="PIRSF004505">
    <property type="entry name" value="MT_bac"/>
    <property type="match status" value="1"/>
</dbReference>
<dbReference type="SUPFAM" id="SSF75217">
    <property type="entry name" value="alpha/beta knot"/>
    <property type="match status" value="1"/>
</dbReference>